<gene>
    <name type="primary">VPS37B</name>
</gene>
<organism>
    <name type="scientific">Homo sapiens</name>
    <name type="common">Human</name>
    <dbReference type="NCBI Taxonomy" id="9606"/>
    <lineage>
        <taxon>Eukaryota</taxon>
        <taxon>Metazoa</taxon>
        <taxon>Chordata</taxon>
        <taxon>Craniata</taxon>
        <taxon>Vertebrata</taxon>
        <taxon>Euteleostomi</taxon>
        <taxon>Mammalia</taxon>
        <taxon>Eutheria</taxon>
        <taxon>Euarchontoglires</taxon>
        <taxon>Primates</taxon>
        <taxon>Haplorrhini</taxon>
        <taxon>Catarrhini</taxon>
        <taxon>Hominidae</taxon>
        <taxon>Homo</taxon>
    </lineage>
</organism>
<sequence>MAGAGSEARFAGLSLVQLNELLEDEGQLTEMVQKMEETQNVQLNKEMTLASNRSLAEGNLLYQPQLDTLKARLTQKYQELQVLFEAYQIKKTKLDRQSSSASLETLLALLQAEGAKIEEDTENMAEKFLDGELPLDSFIDVYQSKRKLAHMRRVKIEKLQEMVLKGQRLPQALAPLPPRLPELAPTAPLPYPAPEASGPPAVAPRRIPPPPPPVPAGRLATPFTAAMSSGQAVPYPGLQCPPLPPRVGLPTQQGFSSQFVSPYPPPLPQRPPPRLPPHQPGFILQ</sequence>
<protein>
    <recommendedName>
        <fullName>Vacuolar protein sorting-associated protein 37B</fullName>
        <shortName>hVps37B</shortName>
    </recommendedName>
    <alternativeName>
        <fullName>ESCRT-I complex subunit VPS37B</fullName>
    </alternativeName>
</protein>
<proteinExistence type="evidence at protein level"/>
<dbReference type="EMBL" id="AK022812">
    <property type="protein sequence ID" value="BAB14255.1"/>
    <property type="molecule type" value="mRNA"/>
</dbReference>
<dbReference type="EMBL" id="BC005882">
    <property type="protein sequence ID" value="AAH05882.1"/>
    <property type="molecule type" value="mRNA"/>
</dbReference>
<dbReference type="CCDS" id="CCDS9239.1"/>
<dbReference type="RefSeq" id="NP_078943.1">
    <property type="nucleotide sequence ID" value="NM_024667.3"/>
</dbReference>
<dbReference type="PDB" id="6VME">
    <property type="method" value="X-ray"/>
    <property type="resolution" value="2.19 A"/>
    <property type="chains" value="C/K/L/M/N/O=97-167"/>
</dbReference>
<dbReference type="PDBsum" id="6VME"/>
<dbReference type="SMR" id="Q9H9H4"/>
<dbReference type="BioGRID" id="122836">
    <property type="interactions" value="66"/>
</dbReference>
<dbReference type="ComplexPortal" id="CPX-2505">
    <property type="entry name" value="ESCRT-I complex, VPS37B-MVB12A variant"/>
</dbReference>
<dbReference type="ComplexPortal" id="CPX-7164">
    <property type="entry name" value="ESCRT-I complex, VPS37B-MVB12B variant"/>
</dbReference>
<dbReference type="ComplexPortal" id="CPX-7201">
    <property type="entry name" value="ESCRT-I complex, VPS37B-UBAP1 variant"/>
</dbReference>
<dbReference type="CORUM" id="Q9H9H4"/>
<dbReference type="ELM" id="Q9H9H4"/>
<dbReference type="FunCoup" id="Q9H9H4">
    <property type="interactions" value="1017"/>
</dbReference>
<dbReference type="IntAct" id="Q9H9H4">
    <property type="interactions" value="46"/>
</dbReference>
<dbReference type="MINT" id="Q9H9H4"/>
<dbReference type="STRING" id="9606.ENSP00000267202"/>
<dbReference type="GlyGen" id="Q9H9H4">
    <property type="glycosylation" value="2 sites, 1 N-linked glycan (1 site), 1 O-linked glycan (1 site)"/>
</dbReference>
<dbReference type="iPTMnet" id="Q9H9H4"/>
<dbReference type="MetOSite" id="Q9H9H4"/>
<dbReference type="PhosphoSitePlus" id="Q9H9H4"/>
<dbReference type="BioMuta" id="VPS37B"/>
<dbReference type="DMDM" id="74734015"/>
<dbReference type="jPOST" id="Q9H9H4"/>
<dbReference type="MassIVE" id="Q9H9H4"/>
<dbReference type="PaxDb" id="9606-ENSP00000267202"/>
<dbReference type="PeptideAtlas" id="Q9H9H4"/>
<dbReference type="ProteomicsDB" id="81322"/>
<dbReference type="Pumba" id="Q9H9H4"/>
<dbReference type="Antibodypedia" id="52311">
    <property type="antibodies" value="74 antibodies from 18 providers"/>
</dbReference>
<dbReference type="DNASU" id="79720"/>
<dbReference type="Ensembl" id="ENST00000267202.7">
    <property type="protein sequence ID" value="ENSP00000267202.2"/>
    <property type="gene ID" value="ENSG00000139722.7"/>
</dbReference>
<dbReference type="GeneID" id="79720"/>
<dbReference type="KEGG" id="hsa:79720"/>
<dbReference type="MANE-Select" id="ENST00000267202.7">
    <property type="protein sequence ID" value="ENSP00000267202.2"/>
    <property type="RefSeq nucleotide sequence ID" value="NM_024667.3"/>
    <property type="RefSeq protein sequence ID" value="NP_078943.1"/>
</dbReference>
<dbReference type="UCSC" id="uc001udl.4">
    <property type="organism name" value="human"/>
</dbReference>
<dbReference type="AGR" id="HGNC:25754"/>
<dbReference type="CTD" id="79720"/>
<dbReference type="DisGeNET" id="79720"/>
<dbReference type="GeneCards" id="VPS37B"/>
<dbReference type="HGNC" id="HGNC:25754">
    <property type="gene designation" value="VPS37B"/>
</dbReference>
<dbReference type="HPA" id="ENSG00000139722">
    <property type="expression patterns" value="Low tissue specificity"/>
</dbReference>
<dbReference type="MIM" id="610037">
    <property type="type" value="gene"/>
</dbReference>
<dbReference type="neXtProt" id="NX_Q9H9H4"/>
<dbReference type="OpenTargets" id="ENSG00000139722"/>
<dbReference type="PharmGKB" id="PA142670616"/>
<dbReference type="VEuPathDB" id="HostDB:ENSG00000139722"/>
<dbReference type="eggNOG" id="KOG3270">
    <property type="taxonomic scope" value="Eukaryota"/>
</dbReference>
<dbReference type="GeneTree" id="ENSGT00950000183012"/>
<dbReference type="HOGENOM" id="CLU_067118_1_0_1"/>
<dbReference type="InParanoid" id="Q9H9H4"/>
<dbReference type="OMA" id="KFSAYTM"/>
<dbReference type="OrthoDB" id="10004364at2759"/>
<dbReference type="PAN-GO" id="Q9H9H4">
    <property type="GO annotations" value="4 GO annotations based on evolutionary models"/>
</dbReference>
<dbReference type="PhylomeDB" id="Q9H9H4"/>
<dbReference type="TreeFam" id="TF321840"/>
<dbReference type="PathwayCommons" id="Q9H9H4"/>
<dbReference type="Reactome" id="R-HSA-162588">
    <property type="pathway name" value="Budding and maturation of HIV virion"/>
</dbReference>
<dbReference type="Reactome" id="R-HSA-174490">
    <property type="pathway name" value="Membrane binding and targetting of GAG proteins"/>
</dbReference>
<dbReference type="Reactome" id="R-HSA-917729">
    <property type="pathway name" value="Endosomal Sorting Complex Required For Transport (ESCRT)"/>
</dbReference>
<dbReference type="Reactome" id="R-HSA-9610379">
    <property type="pathway name" value="HCMV Late Events"/>
</dbReference>
<dbReference type="Reactome" id="R-HSA-9615710">
    <property type="pathway name" value="Late endosomal microautophagy"/>
</dbReference>
<dbReference type="SignaLink" id="Q9H9H4"/>
<dbReference type="BioGRID-ORCS" id="79720">
    <property type="hits" value="22 hits in 1156 CRISPR screens"/>
</dbReference>
<dbReference type="ChiTaRS" id="VPS37B">
    <property type="organism name" value="human"/>
</dbReference>
<dbReference type="GenomeRNAi" id="79720"/>
<dbReference type="Pharos" id="Q9H9H4">
    <property type="development level" value="Tbio"/>
</dbReference>
<dbReference type="PRO" id="PR:Q9H9H4"/>
<dbReference type="Proteomes" id="UP000005640">
    <property type="component" value="Chromosome 12"/>
</dbReference>
<dbReference type="RNAct" id="Q9H9H4">
    <property type="molecule type" value="protein"/>
</dbReference>
<dbReference type="Bgee" id="ENSG00000139722">
    <property type="expression patterns" value="Expressed in lower esophagus mucosa and 185 other cell types or tissues"/>
</dbReference>
<dbReference type="ExpressionAtlas" id="Q9H9H4">
    <property type="expression patterns" value="baseline and differential"/>
</dbReference>
<dbReference type="GO" id="GO:0005737">
    <property type="term" value="C:cytoplasm"/>
    <property type="evidence" value="ECO:0000314"/>
    <property type="project" value="UniProtKB"/>
</dbReference>
<dbReference type="GO" id="GO:0005768">
    <property type="term" value="C:endosome"/>
    <property type="evidence" value="ECO:0000314"/>
    <property type="project" value="UniProtKB"/>
</dbReference>
<dbReference type="GO" id="GO:0010008">
    <property type="term" value="C:endosome membrane"/>
    <property type="evidence" value="ECO:0000314"/>
    <property type="project" value="UniProtKB"/>
</dbReference>
<dbReference type="GO" id="GO:0000813">
    <property type="term" value="C:ESCRT I complex"/>
    <property type="evidence" value="ECO:0000314"/>
    <property type="project" value="UniProtKB"/>
</dbReference>
<dbReference type="GO" id="GO:0070062">
    <property type="term" value="C:extracellular exosome"/>
    <property type="evidence" value="ECO:0007005"/>
    <property type="project" value="UniProtKB"/>
</dbReference>
<dbReference type="GO" id="GO:0031902">
    <property type="term" value="C:late endosome membrane"/>
    <property type="evidence" value="ECO:0007669"/>
    <property type="project" value="UniProtKB-SubCell"/>
</dbReference>
<dbReference type="GO" id="GO:0030496">
    <property type="term" value="C:midbody"/>
    <property type="evidence" value="ECO:0000314"/>
    <property type="project" value="UniProtKB"/>
</dbReference>
<dbReference type="GO" id="GO:0005886">
    <property type="term" value="C:plasma membrane"/>
    <property type="evidence" value="ECO:0000314"/>
    <property type="project" value="UniProtKB"/>
</dbReference>
<dbReference type="GO" id="GO:0048306">
    <property type="term" value="F:calcium-dependent protein binding"/>
    <property type="evidence" value="ECO:0000353"/>
    <property type="project" value="UniProtKB"/>
</dbReference>
<dbReference type="GO" id="GO:0016236">
    <property type="term" value="P:macroautophagy"/>
    <property type="evidence" value="ECO:0000304"/>
    <property type="project" value="ParkinsonsUK-UCL"/>
</dbReference>
<dbReference type="GO" id="GO:0090148">
    <property type="term" value="P:membrane fission"/>
    <property type="evidence" value="ECO:0000303"/>
    <property type="project" value="ComplexPortal"/>
</dbReference>
<dbReference type="GO" id="GO:0036258">
    <property type="term" value="P:multivesicular body assembly"/>
    <property type="evidence" value="ECO:0000304"/>
    <property type="project" value="ParkinsonsUK-UCL"/>
</dbReference>
<dbReference type="GO" id="GO:1903774">
    <property type="term" value="P:positive regulation of viral budding via host ESCRT complex"/>
    <property type="evidence" value="ECO:0000315"/>
    <property type="project" value="UniProtKB"/>
</dbReference>
<dbReference type="GO" id="GO:0006612">
    <property type="term" value="P:protein targeting to membrane"/>
    <property type="evidence" value="ECO:0000318"/>
    <property type="project" value="GO_Central"/>
</dbReference>
<dbReference type="GO" id="GO:0006623">
    <property type="term" value="P:protein targeting to vacuole"/>
    <property type="evidence" value="ECO:0000318"/>
    <property type="project" value="GO_Central"/>
</dbReference>
<dbReference type="GO" id="GO:0043328">
    <property type="term" value="P:protein transport to vacuole involved in ubiquitin-dependent protein catabolic process via the multivesicular body sorting pathway"/>
    <property type="evidence" value="ECO:0000303"/>
    <property type="project" value="ComplexPortal"/>
</dbReference>
<dbReference type="GO" id="GO:0043162">
    <property type="term" value="P:ubiquitin-dependent protein catabolic process via the multivesicular body sorting pathway"/>
    <property type="evidence" value="ECO:0000318"/>
    <property type="project" value="GO_Central"/>
</dbReference>
<dbReference type="GO" id="GO:0039702">
    <property type="term" value="P:viral budding via host ESCRT complex"/>
    <property type="evidence" value="ECO:0000304"/>
    <property type="project" value="ParkinsonsUK-UCL"/>
</dbReference>
<dbReference type="GO" id="GO:0019076">
    <property type="term" value="P:viral release from host cell"/>
    <property type="evidence" value="ECO:0000315"/>
    <property type="project" value="UniProtKB"/>
</dbReference>
<dbReference type="FunFam" id="1.10.287.660:FF:000003">
    <property type="entry name" value="vacuolar protein sorting-associated protein 37B"/>
    <property type="match status" value="1"/>
</dbReference>
<dbReference type="Gene3D" id="1.10.287.660">
    <property type="entry name" value="Helix hairpin bin"/>
    <property type="match status" value="1"/>
</dbReference>
<dbReference type="InterPro" id="IPR037202">
    <property type="entry name" value="ESCRT_assembly_dom"/>
</dbReference>
<dbReference type="InterPro" id="IPR029012">
    <property type="entry name" value="Helix_hairpin_bin_sf"/>
</dbReference>
<dbReference type="InterPro" id="IPR009851">
    <property type="entry name" value="Mod_r"/>
</dbReference>
<dbReference type="PANTHER" id="PTHR13678">
    <property type="entry name" value="VACUOLAR PROTEIN SORTING-ASSOCIATED PROTEIN 37"/>
    <property type="match status" value="1"/>
</dbReference>
<dbReference type="PANTHER" id="PTHR13678:SF9">
    <property type="entry name" value="VACUOLAR PROTEIN SORTING-ASSOCIATED PROTEIN 37B"/>
    <property type="match status" value="1"/>
</dbReference>
<dbReference type="Pfam" id="PF07200">
    <property type="entry name" value="Mod_r"/>
    <property type="match status" value="1"/>
</dbReference>
<dbReference type="SUPFAM" id="SSF140111">
    <property type="entry name" value="Endosomal sorting complex assembly domain"/>
    <property type="match status" value="1"/>
</dbReference>
<dbReference type="PROSITE" id="PS51314">
    <property type="entry name" value="VPS37_C"/>
    <property type="match status" value="1"/>
</dbReference>
<comment type="function">
    <text evidence="3">Component of the ESCRT-I complex, a regulator of vesicular trafficking process. Required for the sorting of endocytic ubiquitinated cargos into multivesicular bodies. May be involved in cell growth and differentiation.</text>
</comment>
<comment type="subunit">
    <text evidence="3 4 5 6 7">Component of the ESCRT-I complex (endosomal sorting complex required for transport I) which consists of TSG101, VPS28, a VPS37 protein (VPS37A to -D) and MVB12A or MVB12B in a 1:1:1:1 stoichiometry. Interacts with TSG101, VPS28, MVB12A and MVB12B. Component of the ESCRT-I complex (endosomal sorting complex required for transport I) which consists of TSG101, VPS28, a VPS37 protein (VPS37A to -D) and UBAP1 in a 1:1:1:1 stoichiometry. Interacts with CEP55. Interacts with IST1.</text>
</comment>
<comment type="interaction">
    <interactant intactId="EBI-4400866">
        <id>Q9H9H4</id>
    </interactant>
    <interactant intactId="EBI-747185">
        <id>O95817</id>
        <label>BAG3</label>
    </interactant>
    <organismsDiffer>false</organismsDiffer>
    <experiments>3</experiments>
</comment>
<comment type="interaction">
    <interactant intactId="EBI-4400866">
        <id>Q9H9H4</id>
    </interactant>
    <interactant intactId="EBI-358049">
        <id>Q13895</id>
        <label>BYSL</label>
    </interactant>
    <organismsDiffer>false</organismsDiffer>
    <experiments>8</experiments>
</comment>
<comment type="interaction">
    <interactant intactId="EBI-4400866">
        <id>Q9H9H4</id>
    </interactant>
    <interactant intactId="EBI-930143">
        <id>Q6P1J9</id>
        <label>CDC73</label>
    </interactant>
    <organismsDiffer>false</organismsDiffer>
    <experiments>3</experiments>
</comment>
<comment type="interaction">
    <interactant intactId="EBI-4400866">
        <id>Q9H9H4</id>
    </interactant>
    <interactant intactId="EBI-740086">
        <id>Q96GG9</id>
        <label>DCUN1D1</label>
    </interactant>
    <organismsDiffer>false</organismsDiffer>
    <experiments>3</experiments>
</comment>
<comment type="interaction">
    <interactant intactId="EBI-4400866">
        <id>Q9H9H4</id>
    </interactant>
    <interactant intactId="EBI-744099">
        <id>Q9H0I2</id>
        <label>ENKD1</label>
    </interactant>
    <organismsDiffer>false</organismsDiffer>
    <experiments>3</experiments>
</comment>
<comment type="interaction">
    <interactant intactId="EBI-4400866">
        <id>Q9H9H4</id>
    </interactant>
    <interactant intactId="EBI-750962">
        <id>P07992</id>
        <label>ERCC1</label>
    </interactant>
    <organismsDiffer>false</organismsDiffer>
    <experiments>4</experiments>
</comment>
<comment type="interaction">
    <interactant intactId="EBI-4400866">
        <id>Q9H9H4</id>
    </interactant>
    <interactant intactId="EBI-742102">
        <id>Q8IYI6</id>
        <label>EXOC8</label>
    </interactant>
    <organismsDiffer>false</organismsDiffer>
    <experiments>3</experiments>
</comment>
<comment type="interaction">
    <interactant intactId="EBI-4400866">
        <id>Q9H9H4</id>
    </interactant>
    <interactant intactId="EBI-10244131">
        <id>Q8TES7-6</id>
        <label>FBF1</label>
    </interactant>
    <organismsDiffer>false</organismsDiffer>
    <experiments>3</experiments>
</comment>
<comment type="interaction">
    <interactant intactId="EBI-4400866">
        <id>Q9H9H4</id>
    </interactant>
    <interactant intactId="EBI-739467">
        <id>Q9H8Y8</id>
        <label>GORASP2</label>
    </interactant>
    <organismsDiffer>false</organismsDiffer>
    <experiments>3</experiments>
</comment>
<comment type="interaction">
    <interactant intactId="EBI-4400866">
        <id>Q9H9H4</id>
    </interactant>
    <interactant intactId="EBI-740220">
        <id>O14964</id>
        <label>HGS</label>
    </interactant>
    <organismsDiffer>false</organismsDiffer>
    <experiments>6</experiments>
</comment>
<comment type="interaction">
    <interactant intactId="EBI-4400866">
        <id>Q9H9H4</id>
    </interactant>
    <interactant intactId="EBI-710124">
        <id>O60341</id>
        <label>KDM1A</label>
    </interactant>
    <organismsDiffer>false</organismsDiffer>
    <experiments>3</experiments>
</comment>
<comment type="interaction">
    <interactant intactId="EBI-4400866">
        <id>Q9H9H4</id>
    </interactant>
    <interactant intactId="EBI-739832">
        <id>Q8TBB1</id>
        <label>LNX1</label>
    </interactant>
    <organismsDiffer>false</organismsDiffer>
    <experiments>3</experiments>
</comment>
<comment type="interaction">
    <interactant intactId="EBI-4400866">
        <id>Q9H9H4</id>
    </interactant>
    <interactant intactId="EBI-713635">
        <id>O43639</id>
        <label>NCK2</label>
    </interactant>
    <organismsDiffer>false</organismsDiffer>
    <experiments>6</experiments>
</comment>
<comment type="interaction">
    <interactant intactId="EBI-4400866">
        <id>Q9H9H4</id>
    </interactant>
    <interactant intactId="EBI-1181405">
        <id>Q13131</id>
        <label>PRKAA1</label>
    </interactant>
    <organismsDiffer>false</organismsDiffer>
    <experiments>3</experiments>
</comment>
<comment type="interaction">
    <interactant intactId="EBI-4400866">
        <id>Q9H9H4</id>
    </interactant>
    <interactant intactId="EBI-1383852">
        <id>P54646</id>
        <label>PRKAA2</label>
    </interactant>
    <organismsDiffer>false</organismsDiffer>
    <experiments>3</experiments>
</comment>
<comment type="interaction">
    <interactant intactId="EBI-4400866">
        <id>Q9H9H4</id>
    </interactant>
    <interactant intactId="EBI-347462">
        <id>P47897</id>
        <label>QARS1</label>
    </interactant>
    <organismsDiffer>false</organismsDiffer>
    <experiments>3</experiments>
</comment>
<comment type="interaction">
    <interactant intactId="EBI-4400866">
        <id>Q9H9H4</id>
    </interactant>
    <interactant intactId="EBI-10209725">
        <id>P47897-2</id>
        <label>QARS1</label>
    </interactant>
    <organismsDiffer>false</organismsDiffer>
    <experiments>3</experiments>
</comment>
<comment type="interaction">
    <interactant intactId="EBI-4400866">
        <id>Q9H9H4</id>
    </interactant>
    <interactant intactId="EBI-722667">
        <id>Q96HL8</id>
        <label>SH3YL1</label>
    </interactant>
    <organismsDiffer>false</organismsDiffer>
    <experiments>7</experiments>
</comment>
<comment type="interaction">
    <interactant intactId="EBI-4400866">
        <id>Q9H9H4</id>
    </interactant>
    <interactant intactId="EBI-358489">
        <id>Q96GM5</id>
        <label>SMARCD1</label>
    </interactant>
    <organismsDiffer>false</organismsDiffer>
    <experiments>7</experiments>
</comment>
<comment type="interaction">
    <interactant intactId="EBI-4400866">
        <id>Q9H9H4</id>
    </interactant>
    <interactant intactId="EBI-741237">
        <id>O60504</id>
        <label>SORBS3</label>
    </interactant>
    <organismsDiffer>false</organismsDiffer>
    <experiments>3</experiments>
</comment>
<comment type="interaction">
    <interactant intactId="EBI-4400866">
        <id>Q9H9H4</id>
    </interactant>
    <interactant intactId="EBI-717810">
        <id>Q08117</id>
        <label>TLE5</label>
    </interactant>
    <organismsDiffer>false</organismsDiffer>
    <experiments>3</experiments>
</comment>
<comment type="interaction">
    <interactant intactId="EBI-4400866">
        <id>Q9H9H4</id>
    </interactant>
    <interactant intactId="EBI-11741437">
        <id>Q08117-2</id>
        <label>TLE5</label>
    </interactant>
    <organismsDiffer>false</organismsDiffer>
    <experiments>3</experiments>
</comment>
<comment type="interaction">
    <interactant intactId="EBI-4400866">
        <id>Q9H9H4</id>
    </interactant>
    <interactant intactId="EBI-346882">
        <id>Q99816</id>
        <label>TSG101</label>
    </interactant>
    <organismsDiffer>false</organismsDiffer>
    <experiments>5</experiments>
</comment>
<comment type="interaction">
    <interactant intactId="EBI-4400866">
        <id>Q9H9H4</id>
    </interactant>
    <interactant intactId="EBI-7353612">
        <id>P57075-2</id>
        <label>UBASH3A</label>
    </interactant>
    <organismsDiffer>false</organismsDiffer>
    <experiments>3</experiments>
</comment>
<comment type="interaction">
    <interactant intactId="EBI-4400866">
        <id>Q9H9H4</id>
    </interactant>
    <interactant intactId="EBI-1380492">
        <id>Q8TF42</id>
        <label>UBASH3B</label>
    </interactant>
    <organismsDiffer>false</organismsDiffer>
    <experiments>6</experiments>
</comment>
<comment type="interaction">
    <interactant intactId="EBI-4400866">
        <id>Q9H9H4</id>
    </interactant>
    <interactant intactId="EBI-10243107">
        <id>Q548N1</id>
        <label>VPS28</label>
    </interactant>
    <organismsDiffer>false</organismsDiffer>
    <experiments>3</experiments>
</comment>
<comment type="interaction">
    <interactant intactId="EBI-4400866">
        <id>Q9H9H4</id>
    </interactant>
    <interactant intactId="EBI-727424">
        <id>Q9UK41</id>
        <label>VPS28</label>
    </interactant>
    <organismsDiffer>false</organismsDiffer>
    <experiments>10</experiments>
</comment>
<comment type="subcellular location">
    <subcellularLocation>
        <location evidence="3">Late endosome membrane</location>
        <topology evidence="3">Peripheral membrane protein</topology>
    </subcellularLocation>
    <text>Recruited to the endosomal membrane in a VPS4A-dependent fashion.</text>
</comment>
<comment type="tissue specificity">
    <text evidence="3">Widely expressed. Expressed in macrophages and lymphocytes.</text>
</comment>
<comment type="similarity">
    <text evidence="8">Belongs to the VPS37 family.</text>
</comment>
<name>VP37B_HUMAN</name>
<accession>Q9H9H4</accession>
<evidence type="ECO:0000255" key="1">
    <source>
        <dbReference type="PROSITE-ProRule" id="PRU00646"/>
    </source>
</evidence>
<evidence type="ECO:0000256" key="2">
    <source>
        <dbReference type="SAM" id="MobiDB-lite"/>
    </source>
</evidence>
<evidence type="ECO:0000269" key="3">
    <source>
    </source>
</evidence>
<evidence type="ECO:0000269" key="4">
    <source>
    </source>
</evidence>
<evidence type="ECO:0000269" key="5">
    <source>
    </source>
</evidence>
<evidence type="ECO:0000269" key="6">
    <source>
    </source>
</evidence>
<evidence type="ECO:0000269" key="7">
    <source>
    </source>
</evidence>
<evidence type="ECO:0000305" key="8"/>
<evidence type="ECO:0007744" key="9">
    <source>
    </source>
</evidence>
<evidence type="ECO:0007829" key="10">
    <source>
        <dbReference type="PDB" id="6VME"/>
    </source>
</evidence>
<feature type="chain" id="PRO_0000287200" description="Vacuolar protein sorting-associated protein 37B">
    <location>
        <begin position="1"/>
        <end position="285"/>
    </location>
</feature>
<feature type="domain" description="VPS37 C-terminal" evidence="1">
    <location>
        <begin position="84"/>
        <end position="173"/>
    </location>
</feature>
<feature type="region of interest" description="Interaction with IST1" evidence="6">
    <location>
        <begin position="50"/>
        <end position="170"/>
    </location>
</feature>
<feature type="region of interest" description="Disordered" evidence="2">
    <location>
        <begin position="175"/>
        <end position="201"/>
    </location>
</feature>
<feature type="region of interest" description="Disordered" evidence="2">
    <location>
        <begin position="230"/>
        <end position="285"/>
    </location>
</feature>
<feature type="compositionally biased region" description="Polar residues" evidence="2">
    <location>
        <begin position="250"/>
        <end position="260"/>
    </location>
</feature>
<feature type="compositionally biased region" description="Pro residues" evidence="2">
    <location>
        <begin position="262"/>
        <end position="279"/>
    </location>
</feature>
<feature type="modified residue" description="Omega-N-methylarginine" evidence="9">
    <location>
        <position position="218"/>
    </location>
</feature>
<feature type="helix" evidence="10">
    <location>
        <begin position="103"/>
        <end position="129"/>
    </location>
</feature>
<feature type="helix" evidence="10">
    <location>
        <begin position="135"/>
        <end position="162"/>
    </location>
</feature>
<reference key="1">
    <citation type="journal article" date="2004" name="Nat. Genet.">
        <title>Complete sequencing and characterization of 21,243 full-length human cDNAs.</title>
        <authorList>
            <person name="Ota T."/>
            <person name="Suzuki Y."/>
            <person name="Nishikawa T."/>
            <person name="Otsuki T."/>
            <person name="Sugiyama T."/>
            <person name="Irie R."/>
            <person name="Wakamatsu A."/>
            <person name="Hayashi K."/>
            <person name="Sato H."/>
            <person name="Nagai K."/>
            <person name="Kimura K."/>
            <person name="Makita H."/>
            <person name="Sekine M."/>
            <person name="Obayashi M."/>
            <person name="Nishi T."/>
            <person name="Shibahara T."/>
            <person name="Tanaka T."/>
            <person name="Ishii S."/>
            <person name="Yamamoto J."/>
            <person name="Saito K."/>
            <person name="Kawai Y."/>
            <person name="Isono Y."/>
            <person name="Nakamura Y."/>
            <person name="Nagahari K."/>
            <person name="Murakami K."/>
            <person name="Yasuda T."/>
            <person name="Iwayanagi T."/>
            <person name="Wagatsuma M."/>
            <person name="Shiratori A."/>
            <person name="Sudo H."/>
            <person name="Hosoiri T."/>
            <person name="Kaku Y."/>
            <person name="Kodaira H."/>
            <person name="Kondo H."/>
            <person name="Sugawara M."/>
            <person name="Takahashi M."/>
            <person name="Kanda K."/>
            <person name="Yokoi T."/>
            <person name="Furuya T."/>
            <person name="Kikkawa E."/>
            <person name="Omura Y."/>
            <person name="Abe K."/>
            <person name="Kamihara K."/>
            <person name="Katsuta N."/>
            <person name="Sato K."/>
            <person name="Tanikawa M."/>
            <person name="Yamazaki M."/>
            <person name="Ninomiya K."/>
            <person name="Ishibashi T."/>
            <person name="Yamashita H."/>
            <person name="Murakawa K."/>
            <person name="Fujimori K."/>
            <person name="Tanai H."/>
            <person name="Kimata M."/>
            <person name="Watanabe M."/>
            <person name="Hiraoka S."/>
            <person name="Chiba Y."/>
            <person name="Ishida S."/>
            <person name="Ono Y."/>
            <person name="Takiguchi S."/>
            <person name="Watanabe S."/>
            <person name="Yosida M."/>
            <person name="Hotuta T."/>
            <person name="Kusano J."/>
            <person name="Kanehori K."/>
            <person name="Takahashi-Fujii A."/>
            <person name="Hara H."/>
            <person name="Tanase T.-O."/>
            <person name="Nomura Y."/>
            <person name="Togiya S."/>
            <person name="Komai F."/>
            <person name="Hara R."/>
            <person name="Takeuchi K."/>
            <person name="Arita M."/>
            <person name="Imose N."/>
            <person name="Musashino K."/>
            <person name="Yuuki H."/>
            <person name="Oshima A."/>
            <person name="Sasaki N."/>
            <person name="Aotsuka S."/>
            <person name="Yoshikawa Y."/>
            <person name="Matsunawa H."/>
            <person name="Ichihara T."/>
            <person name="Shiohata N."/>
            <person name="Sano S."/>
            <person name="Moriya S."/>
            <person name="Momiyama H."/>
            <person name="Satoh N."/>
            <person name="Takami S."/>
            <person name="Terashima Y."/>
            <person name="Suzuki O."/>
            <person name="Nakagawa S."/>
            <person name="Senoh A."/>
            <person name="Mizoguchi H."/>
            <person name="Goto Y."/>
            <person name="Shimizu F."/>
            <person name="Wakebe H."/>
            <person name="Hishigaki H."/>
            <person name="Watanabe T."/>
            <person name="Sugiyama A."/>
            <person name="Takemoto M."/>
            <person name="Kawakami B."/>
            <person name="Yamazaki M."/>
            <person name="Watanabe K."/>
            <person name="Kumagai A."/>
            <person name="Itakura S."/>
            <person name="Fukuzumi Y."/>
            <person name="Fujimori Y."/>
            <person name="Komiyama M."/>
            <person name="Tashiro H."/>
            <person name="Tanigami A."/>
            <person name="Fujiwara T."/>
            <person name="Ono T."/>
            <person name="Yamada K."/>
            <person name="Fujii Y."/>
            <person name="Ozaki K."/>
            <person name="Hirao M."/>
            <person name="Ohmori Y."/>
            <person name="Kawabata A."/>
            <person name="Hikiji T."/>
            <person name="Kobatake N."/>
            <person name="Inagaki H."/>
            <person name="Ikema Y."/>
            <person name="Okamoto S."/>
            <person name="Okitani R."/>
            <person name="Kawakami T."/>
            <person name="Noguchi S."/>
            <person name="Itoh T."/>
            <person name="Shigeta K."/>
            <person name="Senba T."/>
            <person name="Matsumura K."/>
            <person name="Nakajima Y."/>
            <person name="Mizuno T."/>
            <person name="Morinaga M."/>
            <person name="Sasaki M."/>
            <person name="Togashi T."/>
            <person name="Oyama M."/>
            <person name="Hata H."/>
            <person name="Watanabe M."/>
            <person name="Komatsu T."/>
            <person name="Mizushima-Sugano J."/>
            <person name="Satoh T."/>
            <person name="Shirai Y."/>
            <person name="Takahashi Y."/>
            <person name="Nakagawa K."/>
            <person name="Okumura K."/>
            <person name="Nagase T."/>
            <person name="Nomura N."/>
            <person name="Kikuchi H."/>
            <person name="Masuho Y."/>
            <person name="Yamashita R."/>
            <person name="Nakai K."/>
            <person name="Yada T."/>
            <person name="Nakamura Y."/>
            <person name="Ohara O."/>
            <person name="Isogai T."/>
            <person name="Sugano S."/>
        </authorList>
    </citation>
    <scope>NUCLEOTIDE SEQUENCE [LARGE SCALE MRNA]</scope>
</reference>
<reference key="2">
    <citation type="journal article" date="2004" name="Genome Res.">
        <title>The status, quality, and expansion of the NIH full-length cDNA project: the Mammalian Gene Collection (MGC).</title>
        <authorList>
            <consortium name="The MGC Project Team"/>
        </authorList>
    </citation>
    <scope>NUCLEOTIDE SEQUENCE [LARGE SCALE MRNA]</scope>
    <source>
        <tissue>Muscle</tissue>
    </source>
</reference>
<reference key="3">
    <citation type="journal article" date="2004" name="J. Biol. Chem.">
        <title>The human endosomal sorting complex required for transport (ESCRT-I) and its role in HIV-1 budding.</title>
        <authorList>
            <person name="Stuchell M.D."/>
            <person name="Garrus J.E."/>
            <person name="Mueller B."/>
            <person name="Stray K.M."/>
            <person name="Ghaffarian S."/>
            <person name="McKinnon R."/>
            <person name="Kraeusslich H.-G."/>
            <person name="Morham S.G."/>
            <person name="Sundquist W.I."/>
        </authorList>
    </citation>
    <scope>FUNCTION</scope>
    <scope>INTERACTION WITH TSG101</scope>
    <scope>SUBCELLULAR LOCATION</scope>
    <scope>TISSUE SPECIFICITY</scope>
</reference>
<reference key="4">
    <citation type="journal article" date="2007" name="Cell Host Microbe">
        <title>Identification of human MVB12 proteins as ESCRT-I subunits that function in HIV budding.</title>
        <authorList>
            <person name="Morita E."/>
            <person name="Sandrin V."/>
            <person name="Alam S.L."/>
            <person name="Eckert D.M."/>
            <person name="Gygi S.P."/>
            <person name="Sundquist W.I."/>
        </authorList>
    </citation>
    <scope>INTERACTION WITH TSG101; VPS28; MVB12A AND MVB12B</scope>
    <scope>RECONSTITUTION OF THE ESCRT-I COMPLEX</scope>
    <scope>IDENTIFICATION BY MASS SPECTROMETRY</scope>
</reference>
<reference key="5">
    <citation type="journal article" date="2007" name="EMBO J.">
        <title>Human ESCRT and ALIX proteins interact with proteins of the midbody and function in cytokinesis.</title>
        <authorList>
            <person name="Morita E."/>
            <person name="Sandrin V."/>
            <person name="Chung H.Y."/>
            <person name="Morham S.G."/>
            <person name="Gygi S.P."/>
            <person name="Rodesch C.K."/>
            <person name="Sundquist W.I."/>
        </authorList>
    </citation>
    <scope>INTERACTION WITH CEP55</scope>
</reference>
<reference key="6">
    <citation type="journal article" date="2009" name="Mol. Biol. Cell">
        <title>Biochemical analyses of human IST1 and its function in cytokinesis.</title>
        <authorList>
            <person name="Bajorek M."/>
            <person name="Morita E."/>
            <person name="Skalicky J.J."/>
            <person name="Morham S.G."/>
            <person name="Babst M."/>
            <person name="Sundquist W.I."/>
        </authorList>
    </citation>
    <scope>INTERACTION WITH IST1</scope>
</reference>
<reference key="7">
    <citation type="journal article" date="2011" name="BMC Syst. Biol.">
        <title>Initial characterization of the human central proteome.</title>
        <authorList>
            <person name="Burkard T.R."/>
            <person name="Planyavsky M."/>
            <person name="Kaupe I."/>
            <person name="Breitwieser F.P."/>
            <person name="Buerckstuemmer T."/>
            <person name="Bennett K.L."/>
            <person name="Superti-Furga G."/>
            <person name="Colinge J."/>
        </authorList>
    </citation>
    <scope>IDENTIFICATION BY MASS SPECTROMETRY [LARGE SCALE ANALYSIS]</scope>
</reference>
<reference key="8">
    <citation type="journal article" date="2012" name="Structure">
        <title>The UBAP1 subunit of ESCRT-I interacts with ubiquitin via a SOUBA domain.</title>
        <authorList>
            <person name="Agromayor M."/>
            <person name="Soler N."/>
            <person name="Caballe A."/>
            <person name="Kueck T."/>
            <person name="Freund S.M."/>
            <person name="Allen M.D."/>
            <person name="Bycroft M."/>
            <person name="Perisic O."/>
            <person name="Ye Y."/>
            <person name="McDonald B."/>
            <person name="Scheel H."/>
            <person name="Hofmann K."/>
            <person name="Neil S.J."/>
            <person name="Martin-Serrano J."/>
            <person name="Williams R.L."/>
        </authorList>
    </citation>
    <scope>IDENTIFICATION IN AN ESCRT-I COMPLEX WITH UBAP1</scope>
    <scope>SUBUNIT</scope>
</reference>
<reference key="9">
    <citation type="journal article" date="2014" name="Mol. Cell. Proteomics">
        <title>Immunoaffinity enrichment and mass spectrometry analysis of protein methylation.</title>
        <authorList>
            <person name="Guo A."/>
            <person name="Gu H."/>
            <person name="Zhou J."/>
            <person name="Mulhern D."/>
            <person name="Wang Y."/>
            <person name="Lee K.A."/>
            <person name="Yang V."/>
            <person name="Aguiar M."/>
            <person name="Kornhauser J."/>
            <person name="Jia X."/>
            <person name="Ren J."/>
            <person name="Beausoleil S.A."/>
            <person name="Silva J.C."/>
            <person name="Vemulapalli V."/>
            <person name="Bedford M.T."/>
            <person name="Comb M.J."/>
        </authorList>
    </citation>
    <scope>METHYLATION [LARGE SCALE ANALYSIS] AT ARG-218</scope>
    <scope>IDENTIFICATION BY MASS SPECTROMETRY [LARGE SCALE ANALYSIS]</scope>
    <source>
        <tissue>Colon carcinoma</tissue>
    </source>
</reference>
<keyword id="KW-0002">3D-structure</keyword>
<keyword id="KW-0967">Endosome</keyword>
<keyword id="KW-0472">Membrane</keyword>
<keyword id="KW-0488">Methylation</keyword>
<keyword id="KW-0653">Protein transport</keyword>
<keyword id="KW-1267">Proteomics identification</keyword>
<keyword id="KW-1185">Reference proteome</keyword>
<keyword id="KW-0813">Transport</keyword>